<name>PEPX_LACP3</name>
<comment type="function">
    <text evidence="1">Removes N-terminal dipeptides sequentially from polypeptides having unsubstituted N-termini provided that the penultimate residue is proline.</text>
</comment>
<comment type="catalytic activity">
    <reaction evidence="1">
        <text>Hydrolyzes Xaa-Pro-|- bonds to release unblocked, N-terminal dipeptides from substrates including Ala-Pro-|-p-nitroanilide and (sequentially) Tyr-Pro-|-Phe-Pro-|-Gly-Pro-|-Ile.</text>
        <dbReference type="EC" id="3.4.14.11"/>
    </reaction>
</comment>
<comment type="subunit">
    <text evidence="1">Homodimer.</text>
</comment>
<comment type="subcellular location">
    <subcellularLocation>
        <location evidence="1">Cytoplasm</location>
    </subcellularLocation>
</comment>
<comment type="similarity">
    <text evidence="1">Belongs to the peptidase S15 family.</text>
</comment>
<protein>
    <recommendedName>
        <fullName evidence="1">Xaa-Pro dipeptidyl-peptidase</fullName>
        <ecNumber evidence="1">3.4.14.11</ecNumber>
    </recommendedName>
    <alternativeName>
        <fullName evidence="1">X-Pro dipeptidyl-peptidase</fullName>
    </alternativeName>
    <alternativeName>
        <fullName evidence="1">X-prolyl-dipeptidyl aminopeptidase</fullName>
        <shortName evidence="1">X-PDAP</shortName>
    </alternativeName>
</protein>
<accession>Q038E8</accession>
<organism>
    <name type="scientific">Lacticaseibacillus paracasei (strain ATCC 334 / BCRC 17002 / CCUG 31169 / CIP 107868 / KCTC 3260 / NRRL B-441)</name>
    <name type="common">Lactobacillus paracasei</name>
    <dbReference type="NCBI Taxonomy" id="321967"/>
    <lineage>
        <taxon>Bacteria</taxon>
        <taxon>Bacillati</taxon>
        <taxon>Bacillota</taxon>
        <taxon>Bacilli</taxon>
        <taxon>Lactobacillales</taxon>
        <taxon>Lactobacillaceae</taxon>
        <taxon>Lacticaseibacillus</taxon>
    </lineage>
</organism>
<feature type="chain" id="PRO_1000045479" description="Xaa-Pro dipeptidyl-peptidase">
    <location>
        <begin position="1"/>
        <end position="797"/>
    </location>
</feature>
<feature type="active site" description="Charge relay system" evidence="1">
    <location>
        <position position="370"/>
    </location>
</feature>
<feature type="active site" description="Charge relay system" evidence="1">
    <location>
        <position position="490"/>
    </location>
</feature>
<feature type="active site" description="Charge relay system" evidence="1">
    <location>
        <position position="521"/>
    </location>
</feature>
<keyword id="KW-0031">Aminopeptidase</keyword>
<keyword id="KW-0963">Cytoplasm</keyword>
<keyword id="KW-0378">Hydrolase</keyword>
<keyword id="KW-0645">Protease</keyword>
<keyword id="KW-1185">Reference proteome</keyword>
<keyword id="KW-0720">Serine protease</keyword>
<dbReference type="EC" id="3.4.14.11" evidence="1"/>
<dbReference type="EMBL" id="CP000423">
    <property type="protein sequence ID" value="ABJ70424.1"/>
    <property type="molecule type" value="Genomic_DNA"/>
</dbReference>
<dbReference type="RefSeq" id="WP_011674559.1">
    <property type="nucleotide sequence ID" value="NC_008526.1"/>
</dbReference>
<dbReference type="RefSeq" id="YP_806866.1">
    <property type="nucleotide sequence ID" value="NC_008526.1"/>
</dbReference>
<dbReference type="SMR" id="Q038E8"/>
<dbReference type="STRING" id="321967.LSEI_1651"/>
<dbReference type="ESTHER" id="lacc3-pepx">
    <property type="family name" value="Lactobacillus_peptidase"/>
</dbReference>
<dbReference type="MEROPS" id="S15.001"/>
<dbReference type="PaxDb" id="321967-LSEI_1651"/>
<dbReference type="KEGG" id="lca:LSEI_1651"/>
<dbReference type="PATRIC" id="fig|321967.11.peg.1631"/>
<dbReference type="HOGENOM" id="CLU_011800_0_0_9"/>
<dbReference type="Proteomes" id="UP000001651">
    <property type="component" value="Chromosome"/>
</dbReference>
<dbReference type="GO" id="GO:0005737">
    <property type="term" value="C:cytoplasm"/>
    <property type="evidence" value="ECO:0007669"/>
    <property type="project" value="UniProtKB-SubCell"/>
</dbReference>
<dbReference type="GO" id="GO:0004177">
    <property type="term" value="F:aminopeptidase activity"/>
    <property type="evidence" value="ECO:0007669"/>
    <property type="project" value="UniProtKB-KW"/>
</dbReference>
<dbReference type="GO" id="GO:0008239">
    <property type="term" value="F:dipeptidyl-peptidase activity"/>
    <property type="evidence" value="ECO:0007669"/>
    <property type="project" value="UniProtKB-UniRule"/>
</dbReference>
<dbReference type="GO" id="GO:0008236">
    <property type="term" value="F:serine-type peptidase activity"/>
    <property type="evidence" value="ECO:0007669"/>
    <property type="project" value="UniProtKB-KW"/>
</dbReference>
<dbReference type="GO" id="GO:0006508">
    <property type="term" value="P:proteolysis"/>
    <property type="evidence" value="ECO:0007669"/>
    <property type="project" value="UniProtKB-KW"/>
</dbReference>
<dbReference type="Gene3D" id="1.10.246.70">
    <property type="match status" value="1"/>
</dbReference>
<dbReference type="Gene3D" id="3.40.50.1820">
    <property type="entry name" value="alpha/beta hydrolase"/>
    <property type="match status" value="1"/>
</dbReference>
<dbReference type="Gene3D" id="2.60.120.260">
    <property type="entry name" value="Galactose-binding domain-like"/>
    <property type="match status" value="1"/>
</dbReference>
<dbReference type="HAMAP" id="MF_00698">
    <property type="entry name" value="Aminopeptidase_S15"/>
    <property type="match status" value="1"/>
</dbReference>
<dbReference type="InterPro" id="IPR029058">
    <property type="entry name" value="AB_hydrolase_fold"/>
</dbReference>
<dbReference type="InterPro" id="IPR008979">
    <property type="entry name" value="Galactose-bd-like_sf"/>
</dbReference>
<dbReference type="InterPro" id="IPR008252">
    <property type="entry name" value="Pept_S15_Xpro"/>
</dbReference>
<dbReference type="InterPro" id="IPR015251">
    <property type="entry name" value="PepX_N_dom"/>
</dbReference>
<dbReference type="InterPro" id="IPR036313">
    <property type="entry name" value="PepX_N_dom_sf"/>
</dbReference>
<dbReference type="InterPro" id="IPR000383">
    <property type="entry name" value="Xaa-Pro-like_dom"/>
</dbReference>
<dbReference type="InterPro" id="IPR013736">
    <property type="entry name" value="Xaa-Pro_dipept_C"/>
</dbReference>
<dbReference type="NCBIfam" id="NF003781">
    <property type="entry name" value="PRK05371.1-2"/>
    <property type="match status" value="1"/>
</dbReference>
<dbReference type="Pfam" id="PF02129">
    <property type="entry name" value="Peptidase_S15"/>
    <property type="match status" value="1"/>
</dbReference>
<dbReference type="Pfam" id="PF08530">
    <property type="entry name" value="PepX_C"/>
    <property type="match status" value="1"/>
</dbReference>
<dbReference type="Pfam" id="PF09168">
    <property type="entry name" value="PepX_N"/>
    <property type="match status" value="1"/>
</dbReference>
<dbReference type="PRINTS" id="PR00923">
    <property type="entry name" value="LACTOPTASE"/>
</dbReference>
<dbReference type="SMART" id="SM00939">
    <property type="entry name" value="PepX_C"/>
    <property type="match status" value="1"/>
</dbReference>
<dbReference type="SMART" id="SM00940">
    <property type="entry name" value="PepX_N"/>
    <property type="match status" value="1"/>
</dbReference>
<dbReference type="SUPFAM" id="SSF53474">
    <property type="entry name" value="alpha/beta-Hydrolases"/>
    <property type="match status" value="1"/>
</dbReference>
<dbReference type="SUPFAM" id="SSF49785">
    <property type="entry name" value="Galactose-binding domain-like"/>
    <property type="match status" value="1"/>
</dbReference>
<dbReference type="SUPFAM" id="SSF81761">
    <property type="entry name" value="X-Prolyl dipeptidyl aminopeptidase PepX, N-terminal domain"/>
    <property type="match status" value="1"/>
</dbReference>
<sequence>MKLNQFARLTPDFKVQVAELKQIGLQADPDDTFSQSTTDLFNAFFPEAYTLAAKKDKLAQVAVNMDQTLAAWLAKKPSKMTRRDFYNVALQLLGFEAFTDFDLNDPFKMMTATKLPSLDHDLTSTADLLKAVYLLLNTRTKHLVSYLDDLANRGFLKDFQKKQKKPTHLLFNGKVQQVFDARQAVREVVWIESDMDTDHDGQRDLLEATIYRPKATDQGLKVPVLFTANPYFHGTNDVTAVTHVPETTLAVKTHGASKAEVTANPEEPANLPHHPVNGEATQAEAYAEENGMYAFNDYFLARGFAVVYSAGVGTRYSDGFRTTGGPEETDGAVAVIEWLTGKRRAFTNRTDGITIKAWWSTGLVAMTGKSYLATLAMAAATTGVDGLKTIVADAGISSWYDYYRENGLVVAPGGFQGEDADVLAVDTFSRQKSGGDLINIKQAWEKHLATITHDQDRTTGAYNTWWDARNYRKNANKVKADVVLIHGLNDWNVKPTNAIKFWEAIADLPIQKKLVLHQGQHVYVHNVRSLDFLDMMNLWLTHELLGEANGAEDVLPNVVVQDNVAVQTWSAYQNFASPAAEHVTNTRNLKTDFEAATDQFTDHATATFDAQHDTSASFETAIITPNSAYANSRLWLTQPPLERDQTLEGIPHLELTLAIDAPTGILSVRLIDLGMAKRFGETAATVALNGLQLGFDYKTTDILEFKPTAKPTPSKLISLGHINLQNPKNAYEVQRITPGQPFHISLDLQPTHYHLPAGRQLALVIHGADMAQTIRPIKTTHYQIDLANSSITLPYRI</sequence>
<gene>
    <name evidence="1" type="primary">pepX</name>
    <name type="ordered locus">LSEI_1651</name>
</gene>
<evidence type="ECO:0000255" key="1">
    <source>
        <dbReference type="HAMAP-Rule" id="MF_00698"/>
    </source>
</evidence>
<proteinExistence type="inferred from homology"/>
<reference key="1">
    <citation type="journal article" date="2006" name="Proc. Natl. Acad. Sci. U.S.A.">
        <title>Comparative genomics of the lactic acid bacteria.</title>
        <authorList>
            <person name="Makarova K.S."/>
            <person name="Slesarev A."/>
            <person name="Wolf Y.I."/>
            <person name="Sorokin A."/>
            <person name="Mirkin B."/>
            <person name="Koonin E.V."/>
            <person name="Pavlov A."/>
            <person name="Pavlova N."/>
            <person name="Karamychev V."/>
            <person name="Polouchine N."/>
            <person name="Shakhova V."/>
            <person name="Grigoriev I."/>
            <person name="Lou Y."/>
            <person name="Rohksar D."/>
            <person name="Lucas S."/>
            <person name="Huang K."/>
            <person name="Goodstein D.M."/>
            <person name="Hawkins T."/>
            <person name="Plengvidhya V."/>
            <person name="Welker D."/>
            <person name="Hughes J."/>
            <person name="Goh Y."/>
            <person name="Benson A."/>
            <person name="Baldwin K."/>
            <person name="Lee J.-H."/>
            <person name="Diaz-Muniz I."/>
            <person name="Dosti B."/>
            <person name="Smeianov V."/>
            <person name="Wechter W."/>
            <person name="Barabote R."/>
            <person name="Lorca G."/>
            <person name="Altermann E."/>
            <person name="Barrangou R."/>
            <person name="Ganesan B."/>
            <person name="Xie Y."/>
            <person name="Rawsthorne H."/>
            <person name="Tamir D."/>
            <person name="Parker C."/>
            <person name="Breidt F."/>
            <person name="Broadbent J.R."/>
            <person name="Hutkins R."/>
            <person name="O'Sullivan D."/>
            <person name="Steele J."/>
            <person name="Unlu G."/>
            <person name="Saier M.H. Jr."/>
            <person name="Klaenhammer T."/>
            <person name="Richardson P."/>
            <person name="Kozyavkin S."/>
            <person name="Weimer B.C."/>
            <person name="Mills D.A."/>
        </authorList>
    </citation>
    <scope>NUCLEOTIDE SEQUENCE [LARGE SCALE GENOMIC DNA]</scope>
    <source>
        <strain>ATCC 334 / BCRC 17002 / CCUG 31169 / CIP 107868 / KCTC 3260 / NRRL B-441</strain>
    </source>
</reference>